<proteinExistence type="inferred from homology"/>
<reference key="1">
    <citation type="journal article" date="2008" name="PLoS Genet.">
        <title>Complete genome sequence of the N2-fixing broad host range endophyte Klebsiella pneumoniae 342 and virulence predictions verified in mice.</title>
        <authorList>
            <person name="Fouts D.E."/>
            <person name="Tyler H.L."/>
            <person name="DeBoy R.T."/>
            <person name="Daugherty S."/>
            <person name="Ren Q."/>
            <person name="Badger J.H."/>
            <person name="Durkin A.S."/>
            <person name="Huot H."/>
            <person name="Shrivastava S."/>
            <person name="Kothari S."/>
            <person name="Dodson R.J."/>
            <person name="Mohamoud Y."/>
            <person name="Khouri H."/>
            <person name="Roesch L.F.W."/>
            <person name="Krogfelt K.A."/>
            <person name="Struve C."/>
            <person name="Triplett E.W."/>
            <person name="Methe B.A."/>
        </authorList>
    </citation>
    <scope>NUCLEOTIDE SEQUENCE [LARGE SCALE GENOMIC DNA]</scope>
    <source>
        <strain>342</strain>
    </source>
</reference>
<dbReference type="EC" id="1.18.6.1" evidence="1"/>
<dbReference type="EMBL" id="CP000964">
    <property type="protein sequence ID" value="ACI11459.1"/>
    <property type="molecule type" value="Genomic_DNA"/>
</dbReference>
<dbReference type="SMR" id="B5XPH2"/>
<dbReference type="KEGG" id="kpe:KPK_1714"/>
<dbReference type="HOGENOM" id="CLU_059373_0_0_6"/>
<dbReference type="Proteomes" id="UP000001734">
    <property type="component" value="Chromosome"/>
</dbReference>
<dbReference type="GO" id="GO:0051539">
    <property type="term" value="F:4 iron, 4 sulfur cluster binding"/>
    <property type="evidence" value="ECO:0007669"/>
    <property type="project" value="UniProtKB-KW"/>
</dbReference>
<dbReference type="GO" id="GO:0005524">
    <property type="term" value="F:ATP binding"/>
    <property type="evidence" value="ECO:0007669"/>
    <property type="project" value="UniProtKB-UniRule"/>
</dbReference>
<dbReference type="GO" id="GO:0046872">
    <property type="term" value="F:metal ion binding"/>
    <property type="evidence" value="ECO:0007669"/>
    <property type="project" value="UniProtKB-KW"/>
</dbReference>
<dbReference type="GO" id="GO:0016163">
    <property type="term" value="F:nitrogenase activity"/>
    <property type="evidence" value="ECO:0007669"/>
    <property type="project" value="UniProtKB-UniRule"/>
</dbReference>
<dbReference type="GO" id="GO:0009399">
    <property type="term" value="P:nitrogen fixation"/>
    <property type="evidence" value="ECO:0007669"/>
    <property type="project" value="UniProtKB-UniRule"/>
</dbReference>
<dbReference type="CDD" id="cd02040">
    <property type="entry name" value="NifH"/>
    <property type="match status" value="1"/>
</dbReference>
<dbReference type="FunFam" id="3.40.50.300:FF:001379">
    <property type="entry name" value="Nitrogenase iron protein 1"/>
    <property type="match status" value="1"/>
</dbReference>
<dbReference type="Gene3D" id="3.40.50.300">
    <property type="entry name" value="P-loop containing nucleotide triphosphate hydrolases"/>
    <property type="match status" value="1"/>
</dbReference>
<dbReference type="HAMAP" id="MF_00533">
    <property type="entry name" value="NifH"/>
    <property type="match status" value="1"/>
</dbReference>
<dbReference type="InterPro" id="IPR030655">
    <property type="entry name" value="NifH/chlL_CS"/>
</dbReference>
<dbReference type="InterPro" id="IPR000392">
    <property type="entry name" value="NifH/frxC"/>
</dbReference>
<dbReference type="InterPro" id="IPR005977">
    <property type="entry name" value="Nitrogenase_Fe_NifH"/>
</dbReference>
<dbReference type="InterPro" id="IPR027417">
    <property type="entry name" value="P-loop_NTPase"/>
</dbReference>
<dbReference type="NCBIfam" id="TIGR01287">
    <property type="entry name" value="nifH"/>
    <property type="match status" value="1"/>
</dbReference>
<dbReference type="PANTHER" id="PTHR42864">
    <property type="entry name" value="LIGHT-INDEPENDENT PROTOCHLOROPHYLLIDE REDUCTASE IRON-SULFUR ATP-BINDING PROTEIN"/>
    <property type="match status" value="1"/>
</dbReference>
<dbReference type="PANTHER" id="PTHR42864:SF2">
    <property type="entry name" value="LIGHT-INDEPENDENT PROTOCHLOROPHYLLIDE REDUCTASE IRON-SULFUR ATP-BINDING PROTEIN"/>
    <property type="match status" value="1"/>
</dbReference>
<dbReference type="Pfam" id="PF00142">
    <property type="entry name" value="Fer4_NifH"/>
    <property type="match status" value="1"/>
</dbReference>
<dbReference type="PIRSF" id="PIRSF000363">
    <property type="entry name" value="Nitrogenase_iron"/>
    <property type="match status" value="1"/>
</dbReference>
<dbReference type="PRINTS" id="PR00091">
    <property type="entry name" value="NITROGNASEII"/>
</dbReference>
<dbReference type="SUPFAM" id="SSF52540">
    <property type="entry name" value="P-loop containing nucleoside triphosphate hydrolases"/>
    <property type="match status" value="1"/>
</dbReference>
<dbReference type="PROSITE" id="PS00746">
    <property type="entry name" value="NIFH_FRXC_1"/>
    <property type="match status" value="1"/>
</dbReference>
<dbReference type="PROSITE" id="PS00692">
    <property type="entry name" value="NIFH_FRXC_2"/>
    <property type="match status" value="1"/>
</dbReference>
<dbReference type="PROSITE" id="PS51026">
    <property type="entry name" value="NIFH_FRXC_3"/>
    <property type="match status" value="1"/>
</dbReference>
<name>NIFH_KLEP3</name>
<evidence type="ECO:0000255" key="1">
    <source>
        <dbReference type="HAMAP-Rule" id="MF_00533"/>
    </source>
</evidence>
<organism>
    <name type="scientific">Klebsiella pneumoniae (strain 342)</name>
    <dbReference type="NCBI Taxonomy" id="507522"/>
    <lineage>
        <taxon>Bacteria</taxon>
        <taxon>Pseudomonadati</taxon>
        <taxon>Pseudomonadota</taxon>
        <taxon>Gammaproteobacteria</taxon>
        <taxon>Enterobacterales</taxon>
        <taxon>Enterobacteriaceae</taxon>
        <taxon>Klebsiella/Raoultella group</taxon>
        <taxon>Klebsiella</taxon>
        <taxon>Klebsiella pneumoniae complex</taxon>
    </lineage>
</organism>
<comment type="function">
    <text evidence="1">The key enzymatic reactions in nitrogen fixation are catalyzed by the nitrogenase complex, which has 2 components: the iron protein and the molybdenum-iron protein.</text>
</comment>
<comment type="catalytic activity">
    <reaction evidence="1">
        <text>N2 + 8 reduced [2Fe-2S]-[ferredoxin] + 16 ATP + 16 H2O = H2 + 8 oxidized [2Fe-2S]-[ferredoxin] + 2 NH4(+) + 16 ADP + 16 phosphate + 6 H(+)</text>
        <dbReference type="Rhea" id="RHEA:21448"/>
        <dbReference type="Rhea" id="RHEA-COMP:10000"/>
        <dbReference type="Rhea" id="RHEA-COMP:10001"/>
        <dbReference type="ChEBI" id="CHEBI:15377"/>
        <dbReference type="ChEBI" id="CHEBI:15378"/>
        <dbReference type="ChEBI" id="CHEBI:17997"/>
        <dbReference type="ChEBI" id="CHEBI:18276"/>
        <dbReference type="ChEBI" id="CHEBI:28938"/>
        <dbReference type="ChEBI" id="CHEBI:30616"/>
        <dbReference type="ChEBI" id="CHEBI:33737"/>
        <dbReference type="ChEBI" id="CHEBI:33738"/>
        <dbReference type="ChEBI" id="CHEBI:43474"/>
        <dbReference type="ChEBI" id="CHEBI:456216"/>
        <dbReference type="EC" id="1.18.6.1"/>
    </reaction>
</comment>
<comment type="cofactor">
    <cofactor evidence="1">
        <name>[4Fe-4S] cluster</name>
        <dbReference type="ChEBI" id="CHEBI:49883"/>
    </cofactor>
    <text evidence="1">Binds 1 [4Fe-4S] cluster per dimer.</text>
</comment>
<comment type="subunit">
    <text evidence="1">Homodimer.</text>
</comment>
<comment type="PTM">
    <text evidence="1">The reversible ADP-ribosylation of Arg-101 inactivates the nitrogenase reductase and regulates nitrogenase activity.</text>
</comment>
<comment type="similarity">
    <text evidence="1">Belongs to the NifH/BchL/ChlL family.</text>
</comment>
<feature type="chain" id="PRO_1000211872" description="Nitrogenase iron protein">
    <location>
        <begin position="1"/>
        <end position="293"/>
    </location>
</feature>
<feature type="binding site" evidence="1">
    <location>
        <begin position="10"/>
        <end position="17"/>
    </location>
    <ligand>
        <name>ATP</name>
        <dbReference type="ChEBI" id="CHEBI:30616"/>
    </ligand>
</feature>
<feature type="binding site" evidence="1">
    <location>
        <position position="98"/>
    </location>
    <ligand>
        <name>[4Fe-4S] cluster</name>
        <dbReference type="ChEBI" id="CHEBI:49883"/>
        <note>ligand shared between dimeric partners</note>
    </ligand>
</feature>
<feature type="binding site" evidence="1">
    <location>
        <position position="133"/>
    </location>
    <ligand>
        <name>[4Fe-4S] cluster</name>
        <dbReference type="ChEBI" id="CHEBI:49883"/>
        <note>ligand shared between dimeric partners</note>
    </ligand>
</feature>
<feature type="modified residue" description="ADP-ribosylarginine; by dinitrogenase reductase ADP-ribosyltransferase" evidence="1">
    <location>
        <position position="101"/>
    </location>
</feature>
<sequence>MTMRQCAIYGKGGIGKSTTTQNLVAALAEMGKKVMIVGCDPKADSTRLILHAKAQNTIMEMAAEVGSVEDLELEDVLQIGYGDVRCAESGGPEPGVGCAGRGVITAINFLEEEGAYEEDLDFVFYDVLGDVVCGGFAMPIRENKAQEIYIVCSGEMMAMYAANNISKGIVKYAKSGKVRLGGLICNSRKTDREDELIIALAEKLGTQMIHFVPRDNIVQRAEIRRMTVIEYDPTCQQANEYRQLAQKIVNNTKKVVPTPCTMDELESLLMEFGIMEEEDTSIIGKTAAEENAA</sequence>
<keyword id="KW-0004">4Fe-4S</keyword>
<keyword id="KW-0013">ADP-ribosylation</keyword>
<keyword id="KW-0067">ATP-binding</keyword>
<keyword id="KW-0408">Iron</keyword>
<keyword id="KW-0411">Iron-sulfur</keyword>
<keyword id="KW-0479">Metal-binding</keyword>
<keyword id="KW-0535">Nitrogen fixation</keyword>
<keyword id="KW-0547">Nucleotide-binding</keyword>
<keyword id="KW-0560">Oxidoreductase</keyword>
<gene>
    <name evidence="1" type="primary">nifH</name>
    <name type="ordered locus">KPK_1714</name>
</gene>
<protein>
    <recommendedName>
        <fullName evidence="1">Nitrogenase iron protein</fullName>
        <ecNumber evidence="1">1.18.6.1</ecNumber>
    </recommendedName>
    <alternativeName>
        <fullName evidence="1">Nitrogenase Fe protein</fullName>
    </alternativeName>
    <alternativeName>
        <fullName evidence="1">Nitrogenase component II</fullName>
    </alternativeName>
    <alternativeName>
        <fullName evidence="1">Nitrogenase reductase</fullName>
    </alternativeName>
</protein>
<accession>B5XPH2</accession>